<evidence type="ECO:0000250" key="1">
    <source>
        <dbReference type="UniProtKB" id="Q9NJS1"/>
    </source>
</evidence>
<evidence type="ECO:0000255" key="2"/>
<evidence type="ECO:0000256" key="3">
    <source>
        <dbReference type="SAM" id="MobiDB-lite"/>
    </source>
</evidence>
<evidence type="ECO:0000269" key="4">
    <source>
    </source>
</evidence>
<evidence type="ECO:0000305" key="5"/>
<evidence type="ECO:0000312" key="6">
    <source>
        <dbReference type="EMBL" id="ABI83788.1"/>
    </source>
</evidence>
<evidence type="ECO:0000312" key="7">
    <source>
        <dbReference type="EnsemblMetazoa" id="AFUN004964-PA"/>
    </source>
</evidence>
<feature type="signal peptide" evidence="2">
    <location>
        <begin position="1"/>
        <end position="21"/>
    </location>
</feature>
<feature type="chain" id="PRO_5008134366" description="Salivary thrombin inhibitor anophelin" evidence="2">
    <location>
        <begin position="22"/>
        <end position="102"/>
    </location>
</feature>
<feature type="region of interest" description="Disordered" evidence="3">
    <location>
        <begin position="25"/>
        <end position="102"/>
    </location>
</feature>
<feature type="region of interest" description="Blocks active site cleft of host thrombin in a reverse direction compared to substrates" evidence="1">
    <location>
        <begin position="70"/>
        <end position="73"/>
    </location>
</feature>
<feature type="compositionally biased region" description="Polar residues" evidence="3">
    <location>
        <begin position="59"/>
        <end position="69"/>
    </location>
</feature>
<feature type="compositionally biased region" description="Polar residues" evidence="3">
    <location>
        <begin position="80"/>
        <end position="90"/>
    </location>
</feature>
<feature type="compositionally biased region" description="Low complexity" evidence="3">
    <location>
        <begin position="91"/>
        <end position="102"/>
    </location>
</feature>
<feature type="sequence conflict" description="In Ref. 2; ABI83788." evidence="5" ref="2">
    <original>I</original>
    <variation>V</variation>
    <location>
        <position position="41"/>
    </location>
</feature>
<proteinExistence type="inferred from homology"/>
<protein>
    <recommendedName>
        <fullName evidence="5">Salivary thrombin inhibitor anophelin</fullName>
    </recommendedName>
    <alternativeName>
        <fullName evidence="6">Anophelin-like funestolin</fullName>
    </alternativeName>
</protein>
<organism evidence="7">
    <name type="scientific">Anopheles funestus</name>
    <name type="common">African malaria mosquito</name>
    <dbReference type="NCBI Taxonomy" id="62324"/>
    <lineage>
        <taxon>Eukaryota</taxon>
        <taxon>Metazoa</taxon>
        <taxon>Ecdysozoa</taxon>
        <taxon>Arthropoda</taxon>
        <taxon>Hexapoda</taxon>
        <taxon>Insecta</taxon>
        <taxon>Pterygota</taxon>
        <taxon>Neoptera</taxon>
        <taxon>Endopterygota</taxon>
        <taxon>Diptera</taxon>
        <taxon>Nematocera</taxon>
        <taxon>Culicoidea</taxon>
        <taxon>Culicidae</taxon>
        <taxon>Anophelinae</taxon>
        <taxon>Anopheles</taxon>
    </lineage>
</organism>
<accession>A0A182RFI2</accession>
<accession>Q06DF9</accession>
<sequence length="102" mass="11128">MATKLIVIAFLCAALIAVVQSAPQYAQGEEPTYDEDDDEPIKPHSSADPDASYEEFDPSQLTEYANTAQDPGRRPHFLEQANSNNGDQLPSQSDSSSESTEH</sequence>
<name>SATPA_ANOFN</name>
<keyword id="KW-0964">Secreted</keyword>
<keyword id="KW-0732">Signal</keyword>
<reference evidence="7" key="1">
    <citation type="journal article" date="2019" name="Gigascience">
        <title>A chromosome-scale assembly of the major African malaria vector Anopheles funestus.</title>
        <authorList>
            <person name="Ghurye J."/>
            <person name="Koren S."/>
            <person name="Small S.T."/>
            <person name="Redmond S."/>
            <person name="Howell P."/>
            <person name="Phillippy A.M."/>
            <person name="Besansky N.J."/>
        </authorList>
    </citation>
    <scope>NUCLEOTIDE SEQUENCE [LARGE SCALE GENOMIC DNA]</scope>
    <source>
        <strain evidence="7">FUMOZ</strain>
    </source>
</reference>
<reference evidence="6" key="2">
    <citation type="journal article" date="2007" name="Insect Biochem. Mol. Biol.">
        <title>An insight into the sialome of Anopheles funestus reveals an emerging pattern in anopheline salivagry protein families.</title>
        <authorList>
            <person name="Calvo E."/>
            <person name="Dao A."/>
            <person name="Pham V.M."/>
            <person name="Ribeiro J.M."/>
        </authorList>
    </citation>
    <scope>NUCLEOTIDE SEQUENCE [LARGE SCALE MRNA]</scope>
    <source>
        <tissue evidence="6">Salivary gland</tissue>
    </source>
</reference>
<reference evidence="5" key="3">
    <citation type="journal article" date="2012" name="Proc. Natl. Acad. Sci. U.S.A.">
        <title>Unique thrombin inhibition mechanism by anophelin, an anticoagulant from the malaria vector.</title>
        <authorList>
            <person name="Figueiredo A.C."/>
            <person name="de Sanctis D."/>
            <person name="Gutierrez-Gallego R."/>
            <person name="Cereija T.B."/>
            <person name="Macedo-Ribeiro S."/>
            <person name="Fuentes-Prior P."/>
            <person name="Pereira P.J."/>
        </authorList>
    </citation>
    <scope>FUNCTION</scope>
</reference>
<dbReference type="EMBL" id="DQ910366">
    <property type="protein sequence ID" value="ABI83788.1"/>
    <property type="molecule type" value="mRNA"/>
</dbReference>
<dbReference type="MEROPS" id="I77.001"/>
<dbReference type="EnsemblMetazoa" id="AFUN004964-RA">
    <property type="protein sequence ID" value="AFUN004964-PA"/>
    <property type="gene ID" value="AFUN004964"/>
</dbReference>
<dbReference type="VEuPathDB" id="VectorBase:AFUN004964"/>
<dbReference type="VEuPathDB" id="VectorBase:AFUN2_008890"/>
<dbReference type="GO" id="GO:0005576">
    <property type="term" value="C:extracellular region"/>
    <property type="evidence" value="ECO:0007669"/>
    <property type="project" value="UniProtKB-SubCell"/>
</dbReference>
<dbReference type="InterPro" id="IPR018932">
    <property type="entry name" value="Thrombin_inhibitor_anophelin"/>
</dbReference>
<dbReference type="Pfam" id="PF10731">
    <property type="entry name" value="Anophelin"/>
    <property type="match status" value="1"/>
</dbReference>
<comment type="function">
    <text evidence="4">Salivary protein with anticoagulant activity that inhibits host thrombin (F2).</text>
</comment>
<comment type="subunit">
    <text evidence="1">Interacts with human F2 (thrombin); the interaction results in thrombin inhibition.</text>
</comment>
<comment type="subcellular location">
    <subcellularLocation>
        <location evidence="5">Secreted</location>
    </subcellularLocation>
</comment>
<comment type="similarity">
    <text evidence="5">Belongs to the anophelin family.</text>
</comment>